<proteinExistence type="evidence at protein level"/>
<evidence type="ECO:0000250" key="1"/>
<evidence type="ECO:0000269" key="2">
    <source>
    </source>
</evidence>
<evidence type="ECO:0000305" key="3"/>
<evidence type="ECO:0000305" key="4">
    <source>
    </source>
</evidence>
<protein>
    <recommendedName>
        <fullName>Basic phospholipase A2 BnpTX-1</fullName>
        <shortName>BnPTx-I</shortName>
        <shortName>svPLA2</shortName>
        <ecNumber>3.1.1.4</ecNumber>
    </recommendedName>
    <alternativeName>
        <fullName>Phosphatidylcholine 2-acylhydrolase</fullName>
    </alternativeName>
</protein>
<dbReference type="EC" id="3.1.1.4"/>
<dbReference type="SMR" id="P0DM51"/>
<dbReference type="GO" id="GO:0005576">
    <property type="term" value="C:extracellular region"/>
    <property type="evidence" value="ECO:0007669"/>
    <property type="project" value="UniProtKB-SubCell"/>
</dbReference>
<dbReference type="GO" id="GO:0005509">
    <property type="term" value="F:calcium ion binding"/>
    <property type="evidence" value="ECO:0007669"/>
    <property type="project" value="InterPro"/>
</dbReference>
<dbReference type="GO" id="GO:0047498">
    <property type="term" value="F:calcium-dependent phospholipase A2 activity"/>
    <property type="evidence" value="ECO:0007669"/>
    <property type="project" value="TreeGrafter"/>
</dbReference>
<dbReference type="GO" id="GO:0005543">
    <property type="term" value="F:phospholipid binding"/>
    <property type="evidence" value="ECO:0007669"/>
    <property type="project" value="TreeGrafter"/>
</dbReference>
<dbReference type="GO" id="GO:0090729">
    <property type="term" value="F:toxin activity"/>
    <property type="evidence" value="ECO:0007669"/>
    <property type="project" value="UniProtKB-KW"/>
</dbReference>
<dbReference type="GO" id="GO:0050482">
    <property type="term" value="P:arachidonate secretion"/>
    <property type="evidence" value="ECO:0007669"/>
    <property type="project" value="InterPro"/>
</dbReference>
<dbReference type="GO" id="GO:0042742">
    <property type="term" value="P:defense response to bacterium"/>
    <property type="evidence" value="ECO:0007669"/>
    <property type="project" value="UniProtKB-KW"/>
</dbReference>
<dbReference type="GO" id="GO:0016042">
    <property type="term" value="P:lipid catabolic process"/>
    <property type="evidence" value="ECO:0007669"/>
    <property type="project" value="UniProtKB-KW"/>
</dbReference>
<dbReference type="GO" id="GO:0042130">
    <property type="term" value="P:negative regulation of T cell proliferation"/>
    <property type="evidence" value="ECO:0007669"/>
    <property type="project" value="TreeGrafter"/>
</dbReference>
<dbReference type="GO" id="GO:0006644">
    <property type="term" value="P:phospholipid metabolic process"/>
    <property type="evidence" value="ECO:0007669"/>
    <property type="project" value="InterPro"/>
</dbReference>
<dbReference type="Gene3D" id="1.20.90.10">
    <property type="entry name" value="Phospholipase A2 domain"/>
    <property type="match status" value="1"/>
</dbReference>
<dbReference type="InterPro" id="IPR001211">
    <property type="entry name" value="PLipase_A2"/>
</dbReference>
<dbReference type="InterPro" id="IPR016090">
    <property type="entry name" value="PLipase_A2_dom"/>
</dbReference>
<dbReference type="InterPro" id="IPR036444">
    <property type="entry name" value="PLipase_A2_dom_sf"/>
</dbReference>
<dbReference type="InterPro" id="IPR033113">
    <property type="entry name" value="PLipase_A2_His_AS"/>
</dbReference>
<dbReference type="PANTHER" id="PTHR11716">
    <property type="entry name" value="PHOSPHOLIPASE A2 FAMILY MEMBER"/>
    <property type="match status" value="1"/>
</dbReference>
<dbReference type="PANTHER" id="PTHR11716:SF9">
    <property type="entry name" value="PHOSPHOLIPASE A2, MEMBRANE ASSOCIATED"/>
    <property type="match status" value="1"/>
</dbReference>
<dbReference type="Pfam" id="PF00068">
    <property type="entry name" value="Phospholip_A2_1"/>
    <property type="match status" value="1"/>
</dbReference>
<dbReference type="PRINTS" id="PR00389">
    <property type="entry name" value="PHPHLIPASEA2"/>
</dbReference>
<dbReference type="SMART" id="SM00085">
    <property type="entry name" value="PA2c"/>
    <property type="match status" value="1"/>
</dbReference>
<dbReference type="SUPFAM" id="SSF48619">
    <property type="entry name" value="Phospholipase A2, PLA2"/>
    <property type="match status" value="1"/>
</dbReference>
<dbReference type="PROSITE" id="PS00118">
    <property type="entry name" value="PA2_HIS"/>
    <property type="match status" value="1"/>
</dbReference>
<comment type="function">
    <text evidence="2">Snake venom phospholipase A2 (PLA2). In vitro, shows anticoagulant activity and induces cytotoxicity when tested on C2C12 myoblasts/myotubes. In vivo, when tested on mice, induces myotoxicity (intramuscular injection), edema (injection in the subplantar region) and lethality. Also induces neurotoxic effect on mouse neuromuscular preparations and has bactericidal activity on the Gram-negative bacteria E.coli (ATCC29648) and the Gram-positive S.aureus (ATCC 25923). The catalytic and anticoagulant activities of BnpTX-I are higher than those of BnpTX-II. PLA2 catalyzes the calcium-dependent hydrolysis of the 2-acyl groups in 3-sn-phosphoglycerides.</text>
</comment>
<comment type="catalytic activity">
    <reaction evidence="2">
        <text>a 1,2-diacyl-sn-glycero-3-phosphocholine + H2O = a 1-acyl-sn-glycero-3-phosphocholine + a fatty acid + H(+)</text>
        <dbReference type="Rhea" id="RHEA:15801"/>
        <dbReference type="ChEBI" id="CHEBI:15377"/>
        <dbReference type="ChEBI" id="CHEBI:15378"/>
        <dbReference type="ChEBI" id="CHEBI:28868"/>
        <dbReference type="ChEBI" id="CHEBI:57643"/>
        <dbReference type="ChEBI" id="CHEBI:58168"/>
        <dbReference type="EC" id="3.1.1.4"/>
    </reaction>
</comment>
<comment type="cofactor">
    <cofactor evidence="1">
        <name>Ca(2+)</name>
        <dbReference type="ChEBI" id="CHEBI:29108"/>
    </cofactor>
    <text evidence="1">Binds 1 Ca(2+) ion.</text>
</comment>
<comment type="activity regulation">
    <text evidence="2">P-bromophenacyl bromide (BPB) completely inhibit the catalytic activity whereas it only partially reduces the toxic activities. EDTA and magnesium ions partially inhibit the catalytic activity and partially reduce the toxic activities.</text>
</comment>
<comment type="subunit">
    <text evidence="2">Dimer.</text>
</comment>
<comment type="subcellular location">
    <subcellularLocation>
        <location>Secreted</location>
    </subcellularLocation>
</comment>
<comment type="tissue specificity">
    <text>Expressed by the venom gland.</text>
</comment>
<comment type="PTM">
    <text>Contains 7 disulfide bonds.</text>
</comment>
<comment type="toxic dose">
    <text evidence="2">LD(50) is 5.1 +/- 1.3 mg/kg by intraperitoneal injection into mice.</text>
</comment>
<comment type="toxic dose">
    <text evidence="2">LD(50) is 2.3 +/- 0.8 mg/kg by intravenous injection into mice.</text>
</comment>
<comment type="miscellaneous">
    <text evidence="4">Has a pI of approximately 7.8 and about 121 amino acids.</text>
</comment>
<comment type="similarity">
    <text evidence="3">Belongs to the phospholipase A2 family. Group II subfamily. D49 sub-subfamily.</text>
</comment>
<name>PA2B1_BOTPA</name>
<keyword id="KW-0044">Antibiotic</keyword>
<keyword id="KW-0929">Antimicrobial</keyword>
<keyword id="KW-1203">Blood coagulation cascade inhibiting toxin</keyword>
<keyword id="KW-0106">Calcium</keyword>
<keyword id="KW-0903">Direct protein sequencing</keyword>
<keyword id="KW-1015">Disulfide bond</keyword>
<keyword id="KW-1199">Hemostasis impairing toxin</keyword>
<keyword id="KW-0378">Hydrolase</keyword>
<keyword id="KW-0442">Lipid degradation</keyword>
<keyword id="KW-0443">Lipid metabolism</keyword>
<keyword id="KW-0479">Metal-binding</keyword>
<keyword id="KW-0959">Myotoxin</keyword>
<keyword id="KW-0528">Neurotoxin</keyword>
<keyword id="KW-0964">Secreted</keyword>
<keyword id="KW-0800">Toxin</keyword>
<feature type="chain" id="PRO_0000423032" description="Basic phospholipase A2 BnpTX-1">
    <location>
        <begin position="1"/>
        <end position="50" status="greater than"/>
    </location>
</feature>
<feature type="active site" evidence="1">
    <location>
        <position position="47"/>
    </location>
</feature>
<feature type="binding site" evidence="1">
    <location>
        <position position="27"/>
    </location>
    <ligand>
        <name>Ca(2+)</name>
        <dbReference type="ChEBI" id="CHEBI:29108"/>
    </ligand>
</feature>
<feature type="binding site" evidence="1">
    <location>
        <position position="29"/>
    </location>
    <ligand>
        <name>Ca(2+)</name>
        <dbReference type="ChEBI" id="CHEBI:29108"/>
    </ligand>
</feature>
<feature type="binding site" evidence="1">
    <location>
        <position position="31"/>
    </location>
    <ligand>
        <name>Ca(2+)</name>
        <dbReference type="ChEBI" id="CHEBI:29108"/>
    </ligand>
</feature>
<feature type="binding site" evidence="1">
    <location>
        <position position="48"/>
    </location>
    <ligand>
        <name>Ca(2+)</name>
        <dbReference type="ChEBI" id="CHEBI:29108"/>
    </ligand>
</feature>
<feature type="disulfide bond" evidence="1">
    <location>
        <begin position="26"/>
        <end status="unknown"/>
    </location>
</feature>
<feature type="disulfide bond" evidence="1">
    <location>
        <begin position="28"/>
        <end position="44"/>
    </location>
</feature>
<feature type="disulfide bond" evidence="1">
    <location>
        <begin position="43"/>
        <end status="unknown"/>
    </location>
</feature>
<feature type="disulfide bond" evidence="1">
    <location>
        <begin position="49"/>
        <end status="unknown"/>
    </location>
</feature>
<feature type="disulfide bond" evidence="1">
    <location>
        <begin position="50"/>
        <end status="unknown"/>
    </location>
</feature>
<feature type="non-terminal residue">
    <location>
        <position position="50"/>
    </location>
</feature>
<sequence length="50" mass="5653">DLWQFGKMILKVAGKLPFPYYGAYGCYCGWGGRGKPKDPTDRCCFVHDCC</sequence>
<accession>P0DM51</accession>
<organism>
    <name type="scientific">Bothrops pauloensis</name>
    <name type="common">Neuwied's lancehead</name>
    <name type="synonym">Bothrops neuwiedi pauloensis</name>
    <dbReference type="NCBI Taxonomy" id="1042543"/>
    <lineage>
        <taxon>Eukaryota</taxon>
        <taxon>Metazoa</taxon>
        <taxon>Chordata</taxon>
        <taxon>Craniata</taxon>
        <taxon>Vertebrata</taxon>
        <taxon>Euteleostomi</taxon>
        <taxon>Lepidosauria</taxon>
        <taxon>Squamata</taxon>
        <taxon>Bifurcata</taxon>
        <taxon>Unidentata</taxon>
        <taxon>Episquamata</taxon>
        <taxon>Toxicofera</taxon>
        <taxon>Serpentes</taxon>
        <taxon>Colubroidea</taxon>
        <taxon>Viperidae</taxon>
        <taxon>Crotalinae</taxon>
        <taxon>Bothrops</taxon>
    </lineage>
</organism>
<reference key="1">
    <citation type="journal article" date="2004" name="Toxicon">
        <title>Bactericidal and neurotoxic activities of two myotoxic phospholipases A2 from Bothrops neuwiedi pauloensis snake venom.</title>
        <authorList>
            <person name="Rodrigues V.M."/>
            <person name="Marcussi S."/>
            <person name="Cambraia R.S."/>
            <person name="de Araujo A.L."/>
            <person name="Malta-Neto N.R."/>
            <person name="Hamaguchi A."/>
            <person name="Ferro E.A."/>
            <person name="Homsi-Brandeburgo M.I."/>
            <person name="Giglio J.R."/>
            <person name="Soares A.M."/>
        </authorList>
    </citation>
    <scope>PROTEIN SEQUENCE</scope>
    <scope>FUNCTION</scope>
    <scope>BIOASSAY</scope>
    <scope>CATALYTIC ACTIVITY</scope>
    <scope>SUBUNIT</scope>
    <scope>ACTIVITY REGULATION</scope>
    <scope>DISULFIDE BONDS</scope>
    <scope>TOXIC DOSE</scope>
    <source>
        <tissue>Venom</tissue>
    </source>
</reference>